<dbReference type="EC" id="1.14.14.176" evidence="3"/>
<dbReference type="EMBL" id="AY289209">
    <property type="protein sequence ID" value="AAQ56240.2"/>
    <property type="molecule type" value="mRNA"/>
</dbReference>
<dbReference type="EMBL" id="AY741375">
    <property type="protein sequence ID" value="AAU93341.1"/>
    <property type="status" value="ALT_FRAME"/>
    <property type="molecule type" value="mRNA"/>
</dbReference>
<dbReference type="PDB" id="8X1W">
    <property type="method" value="X-ray"/>
    <property type="resolution" value="2.10 A"/>
    <property type="chains" value="A=61-499"/>
</dbReference>
<dbReference type="PDB" id="8X3E">
    <property type="method" value="X-ray"/>
    <property type="resolution" value="2.50 A"/>
    <property type="chains" value="A=75-498"/>
</dbReference>
<dbReference type="PDBsum" id="8X1W"/>
<dbReference type="PDBsum" id="8X3E"/>
<dbReference type="SMR" id="Q6WG30"/>
<dbReference type="KEGG" id="ag:AAQ56240"/>
<dbReference type="BioCyc" id="MetaCyc:MONOMER-13393"/>
<dbReference type="BRENDA" id="1.14.14.176">
    <property type="organism ID" value="6225"/>
</dbReference>
<dbReference type="SABIO-RK" id="Q6WG30"/>
<dbReference type="UniPathway" id="UPA00842">
    <property type="reaction ID" value="UER00807"/>
</dbReference>
<dbReference type="GO" id="GO:0016020">
    <property type="term" value="C:membrane"/>
    <property type="evidence" value="ECO:0007669"/>
    <property type="project" value="UniProtKB-SubCell"/>
</dbReference>
<dbReference type="GO" id="GO:0020037">
    <property type="term" value="F:heme binding"/>
    <property type="evidence" value="ECO:0007669"/>
    <property type="project" value="InterPro"/>
</dbReference>
<dbReference type="GO" id="GO:0005506">
    <property type="term" value="F:iron ion binding"/>
    <property type="evidence" value="ECO:0007669"/>
    <property type="project" value="InterPro"/>
</dbReference>
<dbReference type="GO" id="GO:0050604">
    <property type="term" value="F:taxadiene 5-alpha-hydroxylase activity"/>
    <property type="evidence" value="ECO:0007669"/>
    <property type="project" value="UniProtKB-EC"/>
</dbReference>
<dbReference type="GO" id="GO:0042617">
    <property type="term" value="P:paclitaxel biosynthetic process"/>
    <property type="evidence" value="ECO:0007669"/>
    <property type="project" value="UniProtKB-UniPathway"/>
</dbReference>
<dbReference type="GO" id="GO:0016125">
    <property type="term" value="P:sterol metabolic process"/>
    <property type="evidence" value="ECO:0007669"/>
    <property type="project" value="TreeGrafter"/>
</dbReference>
<dbReference type="CDD" id="cd11043">
    <property type="entry name" value="CYP90-like"/>
    <property type="match status" value="1"/>
</dbReference>
<dbReference type="FunFam" id="1.10.630.10:FF:000022">
    <property type="entry name" value="Taxadiene 5-alpha hydroxylase"/>
    <property type="match status" value="1"/>
</dbReference>
<dbReference type="Gene3D" id="1.10.630.10">
    <property type="entry name" value="Cytochrome P450"/>
    <property type="match status" value="1"/>
</dbReference>
<dbReference type="InterPro" id="IPR001128">
    <property type="entry name" value="Cyt_P450"/>
</dbReference>
<dbReference type="InterPro" id="IPR017972">
    <property type="entry name" value="Cyt_P450_CS"/>
</dbReference>
<dbReference type="InterPro" id="IPR002401">
    <property type="entry name" value="Cyt_P450_E_grp-I"/>
</dbReference>
<dbReference type="InterPro" id="IPR036396">
    <property type="entry name" value="Cyt_P450_sf"/>
</dbReference>
<dbReference type="PANTHER" id="PTHR24286">
    <property type="entry name" value="CYTOCHROME P450 26"/>
    <property type="match status" value="1"/>
</dbReference>
<dbReference type="PANTHER" id="PTHR24286:SF384">
    <property type="entry name" value="P450, PUTATIVE (EUROFUNG)-RELATED"/>
    <property type="match status" value="1"/>
</dbReference>
<dbReference type="Pfam" id="PF00067">
    <property type="entry name" value="p450"/>
    <property type="match status" value="1"/>
</dbReference>
<dbReference type="PRINTS" id="PR00463">
    <property type="entry name" value="EP450I"/>
</dbReference>
<dbReference type="PRINTS" id="PR00385">
    <property type="entry name" value="P450"/>
</dbReference>
<dbReference type="SUPFAM" id="SSF48264">
    <property type="entry name" value="Cytochrome P450"/>
    <property type="match status" value="1"/>
</dbReference>
<dbReference type="PROSITE" id="PS00086">
    <property type="entry name" value="CYTOCHROME_P450"/>
    <property type="match status" value="1"/>
</dbReference>
<evidence type="ECO:0000250" key="1"/>
<evidence type="ECO:0000255" key="2"/>
<evidence type="ECO:0000269" key="3">
    <source>
    </source>
</evidence>
<evidence type="ECO:0000305" key="4"/>
<reference key="1">
    <citation type="journal article" date="2004" name="Chem. Biol.">
        <title>Cytochrome p450 taxadiene 5alpha-hydroxylase, a mechanistically unusual monooxygenase catalyzing the first oxygenation step of taxol biosynthesis.</title>
        <authorList>
            <person name="Jennewein S."/>
            <person name="Long R.M."/>
            <person name="Williams R.M."/>
            <person name="Croteau R."/>
        </authorList>
    </citation>
    <scope>NUCLEOTIDE SEQUENCE [MRNA]</scope>
    <scope>FUNCTION</scope>
    <scope>CATALYTIC ACTIVITY</scope>
    <scope>BIOPHYSICOCHEMICAL PROPERTIES</scope>
</reference>
<reference key="2">
    <citation type="submission" date="2004-09" db="EMBL/GenBank/DDBJ databases">
        <title>Molecular cloning and sequencing of taxadiene 5-alpha hydroxylase involved in taxol biosynthesis in Taxus chinensis.</title>
        <authorList>
            <person name="Wang W."/>
            <person name="Tu J."/>
            <person name="Cheng K.-D."/>
        </authorList>
    </citation>
    <scope>NUCLEOTIDE SEQUENCE [MRNA]</scope>
</reference>
<comment type="function">
    <text evidence="3">Catalyzes the first oxygenation step of taxol biosynthesis. Can use both taxa-4(5),11(12)-diene and taxa-4(20),11(12)-diene as substrate.</text>
</comment>
<comment type="catalytic activity">
    <reaction evidence="3">
        <text>taxa-4(5),11(12)-diene + reduced [NADPH--hemoprotein reductase] + O2 = taxa-4(20),11-dien-5alpha-ol + oxidized [NADPH--hemoprotein reductase] + H2O + H(+)</text>
        <dbReference type="Rhea" id="RHEA:14049"/>
        <dbReference type="Rhea" id="RHEA-COMP:11964"/>
        <dbReference type="Rhea" id="RHEA-COMP:11965"/>
        <dbReference type="ChEBI" id="CHEBI:15377"/>
        <dbReference type="ChEBI" id="CHEBI:15378"/>
        <dbReference type="ChEBI" id="CHEBI:15379"/>
        <dbReference type="ChEBI" id="CHEBI:30037"/>
        <dbReference type="ChEBI" id="CHEBI:30038"/>
        <dbReference type="ChEBI" id="CHEBI:57618"/>
        <dbReference type="ChEBI" id="CHEBI:58210"/>
        <dbReference type="EC" id="1.14.14.176"/>
    </reaction>
</comment>
<comment type="cofactor">
    <cofactor evidence="1">
        <name>heme</name>
        <dbReference type="ChEBI" id="CHEBI:30413"/>
    </cofactor>
</comment>
<comment type="biophysicochemical properties">
    <kinetics>
        <KM evidence="3">48 uM for taxa-4(5),11(12)-diene (for the native enzyme)</KM>
        <KM evidence="3">24 uM for taxa-4(5),11(12)-diene (for the recombinant enzyme)</KM>
        <KM evidence="3">27 uM for taxa-4(20),11(12)-diene (for the native enzyme)</KM>
        <KM evidence="3">16 uM for taxa-4(20),11(12)-diene (for the recombinant enzyme)</KM>
    </kinetics>
</comment>
<comment type="pathway">
    <text>Alkaloid biosynthesis; taxol biosynthesis; taxa-4(20),11-dien-5alpha-ol from geranylgeranyl diphosphate: step 2/2.</text>
</comment>
<comment type="subcellular location">
    <subcellularLocation>
        <location evidence="4">Membrane</location>
        <topology evidence="4">Single-pass membrane protein</topology>
    </subcellularLocation>
</comment>
<comment type="similarity">
    <text evidence="4">Belongs to the cytochrome P450 family.</text>
</comment>
<comment type="sequence caution" evidence="4">
    <conflict type="frameshift">
        <sequence resource="EMBL-CDS" id="AAU93341"/>
    </conflict>
</comment>
<proteinExistence type="evidence at protein level"/>
<name>T5H_TAXCU</name>
<organism>
    <name type="scientific">Taxus cuspidata</name>
    <name type="common">Japanese yew</name>
    <dbReference type="NCBI Taxonomy" id="99806"/>
    <lineage>
        <taxon>Eukaryota</taxon>
        <taxon>Viridiplantae</taxon>
        <taxon>Streptophyta</taxon>
        <taxon>Embryophyta</taxon>
        <taxon>Tracheophyta</taxon>
        <taxon>Spermatophyta</taxon>
        <taxon>Pinopsida</taxon>
        <taxon>Pinidae</taxon>
        <taxon>Conifers II</taxon>
        <taxon>Cupressales</taxon>
        <taxon>Taxaceae</taxon>
        <taxon>Taxus</taxon>
    </lineage>
</organism>
<keyword id="KW-0002">3D-structure</keyword>
<keyword id="KW-0349">Heme</keyword>
<keyword id="KW-0408">Iron</keyword>
<keyword id="KW-0472">Membrane</keyword>
<keyword id="KW-0479">Metal-binding</keyword>
<keyword id="KW-0503">Monooxygenase</keyword>
<keyword id="KW-0560">Oxidoreductase</keyword>
<keyword id="KW-0735">Signal-anchor</keyword>
<keyword id="KW-0876">Taxol biosynthesis</keyword>
<keyword id="KW-0812">Transmembrane</keyword>
<keyword id="KW-1133">Transmembrane helix</keyword>
<feature type="chain" id="PRO_0000380688" description="Taxadiene 5-alpha hydroxylase">
    <location>
        <begin position="1"/>
        <end position="499"/>
    </location>
</feature>
<feature type="transmembrane region" description="Helical; Signal-anchor" evidence="2">
    <location>
        <begin position="22"/>
        <end position="42"/>
    </location>
</feature>
<feature type="binding site" description="axial binding residue" evidence="1">
    <location>
        <position position="445"/>
    </location>
    <ligand>
        <name>heme</name>
        <dbReference type="ChEBI" id="CHEBI:30413"/>
    </ligand>
    <ligandPart>
        <name>Fe</name>
        <dbReference type="ChEBI" id="CHEBI:18248"/>
    </ligandPart>
</feature>
<feature type="sequence conflict" description="In Ref. 2; AAU93341." evidence="4" ref="2">
    <original>A</original>
    <variation>S</variation>
    <location>
        <position position="31"/>
    </location>
</feature>
<feature type="sequence conflict" description="In Ref. 2; AAU93341." evidence="4" ref="2">
    <original>S</original>
    <variation>N</variation>
    <location>
        <position position="175"/>
    </location>
</feature>
<feature type="sequence conflict" description="In Ref. 2; AAU93341." evidence="4" ref="2">
    <original>K</original>
    <variation>T</variation>
    <location>
        <position position="249"/>
    </location>
</feature>
<feature type="sequence conflict" description="In Ref. 2; AAU93341." evidence="4" ref="2">
    <original>N</original>
    <variation>S</variation>
    <location>
        <position position="413"/>
    </location>
</feature>
<accession>Q6WG30</accession>
<accession>Q5XQ40</accession>
<sequence>MDALYKSTVAKFNEVTQLDCSTESFSIALSAIAGILLLLLLFRSKRHSSLKLPPGKLGIPFIGESFIFLRALRSNSLEQFFDERVKKFGLVFKTSLIGHPTVVLCGPAGNRLILSNEEKLVQMSWPAQFMKLMGENSVATRRGEDHIVMRSALAGFFGPGALQSYIGKMNTEIQSHINEKWKGKDEVNVLPLVRELVFNISAILFFNIYDKQEQDRLHKLLETILVGSFALPIDLPGFGFHRALQGRAKLNKIMLSLIKKRKEDLQSGSATATQDLLSVLLTFRDDKGTPLTNDEILDNFSSLLHASYDTTTSPMALIFKLLSSNPECYQKVVQEQLEILSNKEEGEEITWKDLKAMKYTWQVAQETLRMFPPVFGTFRKAITDIQYDGYTIPKGWKLLWTTYSTHPKDLYFNEPEKFMPSRFDQEGKHVAPYTFLPFGGGQRSCVGWEFSKMEILLFVHHFVKTFSSYTPVDPDEKISGDPLPPLPSKGFSIKLFPRP</sequence>
<protein>
    <recommendedName>
        <fullName>Taxadiene 5-alpha hydroxylase</fullName>
        <ecNumber evidence="3">1.14.14.176</ecNumber>
    </recommendedName>
</protein>